<comment type="similarity">
    <text evidence="1">Belongs to the bacterial ribosomal protein bL33 family.</text>
</comment>
<evidence type="ECO:0000255" key="1">
    <source>
        <dbReference type="HAMAP-Rule" id="MF_00294"/>
    </source>
</evidence>
<evidence type="ECO:0000305" key="2"/>
<name>RL33_VIBC1</name>
<organism>
    <name type="scientific">Vibrio campbellii (strain ATCC BAA-1116)</name>
    <dbReference type="NCBI Taxonomy" id="2902295"/>
    <lineage>
        <taxon>Bacteria</taxon>
        <taxon>Pseudomonadati</taxon>
        <taxon>Pseudomonadota</taxon>
        <taxon>Gammaproteobacteria</taxon>
        <taxon>Vibrionales</taxon>
        <taxon>Vibrionaceae</taxon>
        <taxon>Vibrio</taxon>
    </lineage>
</organism>
<protein>
    <recommendedName>
        <fullName evidence="1">Large ribosomal subunit protein bL33</fullName>
    </recommendedName>
    <alternativeName>
        <fullName evidence="2">50S ribosomal protein L33</fullName>
    </alternativeName>
</protein>
<keyword id="KW-0687">Ribonucleoprotein</keyword>
<keyword id="KW-0689">Ribosomal protein</keyword>
<reference key="1">
    <citation type="submission" date="2007-08" db="EMBL/GenBank/DDBJ databases">
        <authorList>
            <consortium name="The Vibrio harveyi Genome Sequencing Project"/>
            <person name="Bassler B."/>
            <person name="Clifton S.W."/>
            <person name="Fulton L."/>
            <person name="Delehaunty K."/>
            <person name="Fronick C."/>
            <person name="Harrison M."/>
            <person name="Markivic C."/>
            <person name="Fulton R."/>
            <person name="Tin-Wollam A.-M."/>
            <person name="Shah N."/>
            <person name="Pepin K."/>
            <person name="Nash W."/>
            <person name="Thiruvilangam P."/>
            <person name="Bhonagiri V."/>
            <person name="Waters C."/>
            <person name="Tu K.C."/>
            <person name="Irgon J."/>
            <person name="Wilson R.K."/>
        </authorList>
    </citation>
    <scope>NUCLEOTIDE SEQUENCE [LARGE SCALE GENOMIC DNA]</scope>
    <source>
        <strain>ATCC BAA-1116 / BB120</strain>
    </source>
</reference>
<sequence length="56" mass="6524">MAKKGVREKIRLVSSAGTGHFYTTDKNKRNMPGKFEIKKFDPVVRQHVMYKEAKIK</sequence>
<gene>
    <name evidence="1" type="primary">rpmG</name>
    <name type="ordered locus">VIBHAR_00655</name>
</gene>
<proteinExistence type="inferred from homology"/>
<feature type="chain" id="PRO_1000004211" description="Large ribosomal subunit protein bL33">
    <location>
        <begin position="1"/>
        <end position="56"/>
    </location>
</feature>
<accession>A7MSP9</accession>
<dbReference type="EMBL" id="CP000789">
    <property type="protein sequence ID" value="ABU69657.1"/>
    <property type="molecule type" value="Genomic_DNA"/>
</dbReference>
<dbReference type="RefSeq" id="WP_004410866.1">
    <property type="nucleotide sequence ID" value="NC_022269.1"/>
</dbReference>
<dbReference type="SMR" id="A7MSP9"/>
<dbReference type="GeneID" id="97171030"/>
<dbReference type="KEGG" id="vha:VIBHAR_00655"/>
<dbReference type="PATRIC" id="fig|338187.25.peg.1960"/>
<dbReference type="Proteomes" id="UP000008152">
    <property type="component" value="Chromosome I"/>
</dbReference>
<dbReference type="GO" id="GO:0022625">
    <property type="term" value="C:cytosolic large ribosomal subunit"/>
    <property type="evidence" value="ECO:0007669"/>
    <property type="project" value="TreeGrafter"/>
</dbReference>
<dbReference type="GO" id="GO:0003735">
    <property type="term" value="F:structural constituent of ribosome"/>
    <property type="evidence" value="ECO:0007669"/>
    <property type="project" value="InterPro"/>
</dbReference>
<dbReference type="GO" id="GO:0006412">
    <property type="term" value="P:translation"/>
    <property type="evidence" value="ECO:0007669"/>
    <property type="project" value="UniProtKB-UniRule"/>
</dbReference>
<dbReference type="FunFam" id="2.20.28.120:FF:000001">
    <property type="entry name" value="50S ribosomal protein L33"/>
    <property type="match status" value="1"/>
</dbReference>
<dbReference type="Gene3D" id="2.20.28.120">
    <property type="entry name" value="Ribosomal protein L33"/>
    <property type="match status" value="1"/>
</dbReference>
<dbReference type="HAMAP" id="MF_00294">
    <property type="entry name" value="Ribosomal_bL33"/>
    <property type="match status" value="1"/>
</dbReference>
<dbReference type="InterPro" id="IPR001705">
    <property type="entry name" value="Ribosomal_bL33"/>
</dbReference>
<dbReference type="InterPro" id="IPR018264">
    <property type="entry name" value="Ribosomal_bL33_CS"/>
</dbReference>
<dbReference type="InterPro" id="IPR038584">
    <property type="entry name" value="Ribosomal_bL33_sf"/>
</dbReference>
<dbReference type="InterPro" id="IPR011332">
    <property type="entry name" value="Ribosomal_zn-bd"/>
</dbReference>
<dbReference type="NCBIfam" id="NF001860">
    <property type="entry name" value="PRK00595.1"/>
    <property type="match status" value="1"/>
</dbReference>
<dbReference type="NCBIfam" id="TIGR01023">
    <property type="entry name" value="rpmG_bact"/>
    <property type="match status" value="1"/>
</dbReference>
<dbReference type="PANTHER" id="PTHR15238">
    <property type="entry name" value="54S RIBOSOMAL PROTEIN L39, MITOCHONDRIAL"/>
    <property type="match status" value="1"/>
</dbReference>
<dbReference type="PANTHER" id="PTHR15238:SF1">
    <property type="entry name" value="LARGE RIBOSOMAL SUBUNIT PROTEIN BL33M"/>
    <property type="match status" value="1"/>
</dbReference>
<dbReference type="Pfam" id="PF00471">
    <property type="entry name" value="Ribosomal_L33"/>
    <property type="match status" value="1"/>
</dbReference>
<dbReference type="SUPFAM" id="SSF57829">
    <property type="entry name" value="Zn-binding ribosomal proteins"/>
    <property type="match status" value="1"/>
</dbReference>
<dbReference type="PROSITE" id="PS00582">
    <property type="entry name" value="RIBOSOMAL_L33"/>
    <property type="match status" value="1"/>
</dbReference>